<keyword id="KW-0963">Cytoplasm</keyword>
<keyword id="KW-0274">FAD</keyword>
<keyword id="KW-0285">Flavoprotein</keyword>
<keyword id="KW-0489">Methyltransferase</keyword>
<keyword id="KW-0520">NAD</keyword>
<keyword id="KW-0521">NADP</keyword>
<keyword id="KW-0808">Transferase</keyword>
<keyword id="KW-0819">tRNA processing</keyword>
<evidence type="ECO:0000255" key="1">
    <source>
        <dbReference type="HAMAP-Rule" id="MF_01037"/>
    </source>
</evidence>
<name>TRMFO_BACAC</name>
<proteinExistence type="inferred from homology"/>
<reference key="1">
    <citation type="submission" date="2008-10" db="EMBL/GenBank/DDBJ databases">
        <title>Genome sequence of Bacillus anthracis str. CDC 684.</title>
        <authorList>
            <person name="Dodson R.J."/>
            <person name="Munk A.C."/>
            <person name="Brettin T."/>
            <person name="Bruce D."/>
            <person name="Detter C."/>
            <person name="Tapia R."/>
            <person name="Han C."/>
            <person name="Sutton G."/>
            <person name="Sims D."/>
        </authorList>
    </citation>
    <scope>NUCLEOTIDE SEQUENCE [LARGE SCALE GENOMIC DNA]</scope>
    <source>
        <strain>CDC 684 / NRRL 3495</strain>
    </source>
</reference>
<sequence length="434" mass="48068">MTTQVVNVIGAGLAGSEAAYQIAKRGVQVRLYEMRPVRQTPAHHTDKFAELVCSNSLRANTLTNAVGVIKEEMRLMDSVIIRAADECSVPAGGALAVDRHEFAAKVTEYVKNHPNVTVMNEEITEIPEGPTIIATGPLTSPDLSAQLKELTGEDYFYFYDAAAPIVEKDSIDMNKVYLKSRYDKGEAAYLNCPMTEEEFDRFYEALIAAETVPLKEFEKEIFFEGCMPVEVMASRGRQTLVFGPMKPVGLEDPKTGKTPYAVVQLRQDDAAGTLYNIVGFQTHLKWGPQKEVLQLIPGLENAEIVRYGVMHRNTFINSPNLLRPTYQYKQRDDLFFAGQMTGVEGYVESAASGLLAGINAARLVKGEEPVVLPPVTAMGSMANYITATNAKNFQPMNANFGLFAPLEKKIKKKAERNEAYATRALEMIRNFVNI</sequence>
<feature type="chain" id="PRO_1000149465" description="Methylenetetrahydrofolate--tRNA-(uracil-5-)-methyltransferase TrmFO">
    <location>
        <begin position="1"/>
        <end position="434"/>
    </location>
</feature>
<feature type="binding site" evidence="1">
    <location>
        <begin position="10"/>
        <end position="15"/>
    </location>
    <ligand>
        <name>FAD</name>
        <dbReference type="ChEBI" id="CHEBI:57692"/>
    </ligand>
</feature>
<gene>
    <name evidence="1" type="primary">trmFO</name>
    <name type="ordered locus">BAMEG_0662</name>
</gene>
<dbReference type="EC" id="2.1.1.74" evidence="1"/>
<dbReference type="EMBL" id="CP001215">
    <property type="protein sequence ID" value="ACP16525.1"/>
    <property type="molecule type" value="Genomic_DNA"/>
</dbReference>
<dbReference type="RefSeq" id="WP_003161605.1">
    <property type="nucleotide sequence ID" value="NC_012581.1"/>
</dbReference>
<dbReference type="SMR" id="C3L795"/>
<dbReference type="GeneID" id="45023660"/>
<dbReference type="KEGG" id="bah:BAMEG_0662"/>
<dbReference type="HOGENOM" id="CLU_033057_1_0_9"/>
<dbReference type="GO" id="GO:0005829">
    <property type="term" value="C:cytosol"/>
    <property type="evidence" value="ECO:0007669"/>
    <property type="project" value="TreeGrafter"/>
</dbReference>
<dbReference type="GO" id="GO:0050660">
    <property type="term" value="F:flavin adenine dinucleotide binding"/>
    <property type="evidence" value="ECO:0007669"/>
    <property type="project" value="UniProtKB-UniRule"/>
</dbReference>
<dbReference type="GO" id="GO:0047151">
    <property type="term" value="F:tRNA (uracil(54)-C5)-methyltransferase activity, 5,10-methylenetetrahydrofolate-dependent"/>
    <property type="evidence" value="ECO:0007669"/>
    <property type="project" value="UniProtKB-UniRule"/>
</dbReference>
<dbReference type="GO" id="GO:0030488">
    <property type="term" value="P:tRNA methylation"/>
    <property type="evidence" value="ECO:0007669"/>
    <property type="project" value="TreeGrafter"/>
</dbReference>
<dbReference type="GO" id="GO:0002098">
    <property type="term" value="P:tRNA wobble uridine modification"/>
    <property type="evidence" value="ECO:0007669"/>
    <property type="project" value="TreeGrafter"/>
</dbReference>
<dbReference type="FunFam" id="3.50.50.60:FF:000035">
    <property type="entry name" value="Methylenetetrahydrofolate--tRNA-(uracil-5-)-methyltransferase TrmFO"/>
    <property type="match status" value="1"/>
</dbReference>
<dbReference type="FunFam" id="3.50.50.60:FF:000040">
    <property type="entry name" value="Methylenetetrahydrofolate--tRNA-(uracil-5-)-methyltransferase TrmFO"/>
    <property type="match status" value="1"/>
</dbReference>
<dbReference type="Gene3D" id="3.50.50.60">
    <property type="entry name" value="FAD/NAD(P)-binding domain"/>
    <property type="match status" value="2"/>
</dbReference>
<dbReference type="HAMAP" id="MF_01037">
    <property type="entry name" value="TrmFO"/>
    <property type="match status" value="1"/>
</dbReference>
<dbReference type="InterPro" id="IPR036188">
    <property type="entry name" value="FAD/NAD-bd_sf"/>
</dbReference>
<dbReference type="InterPro" id="IPR002218">
    <property type="entry name" value="MnmG-rel"/>
</dbReference>
<dbReference type="InterPro" id="IPR020595">
    <property type="entry name" value="MnmG-rel_CS"/>
</dbReference>
<dbReference type="InterPro" id="IPR040131">
    <property type="entry name" value="MnmG_N"/>
</dbReference>
<dbReference type="InterPro" id="IPR004417">
    <property type="entry name" value="TrmFO"/>
</dbReference>
<dbReference type="NCBIfam" id="TIGR00137">
    <property type="entry name" value="gid_trmFO"/>
    <property type="match status" value="1"/>
</dbReference>
<dbReference type="NCBIfam" id="NF003739">
    <property type="entry name" value="PRK05335.1"/>
    <property type="match status" value="1"/>
</dbReference>
<dbReference type="PANTHER" id="PTHR11806">
    <property type="entry name" value="GLUCOSE INHIBITED DIVISION PROTEIN A"/>
    <property type="match status" value="1"/>
</dbReference>
<dbReference type="PANTHER" id="PTHR11806:SF2">
    <property type="entry name" value="METHYLENETETRAHYDROFOLATE--TRNA-(URACIL-5-)-METHYLTRANSFERASE TRMFO"/>
    <property type="match status" value="1"/>
</dbReference>
<dbReference type="Pfam" id="PF01134">
    <property type="entry name" value="GIDA"/>
    <property type="match status" value="1"/>
</dbReference>
<dbReference type="SUPFAM" id="SSF51905">
    <property type="entry name" value="FAD/NAD(P)-binding domain"/>
    <property type="match status" value="1"/>
</dbReference>
<dbReference type="PROSITE" id="PS01281">
    <property type="entry name" value="GIDA_2"/>
    <property type="match status" value="1"/>
</dbReference>
<organism>
    <name type="scientific">Bacillus anthracis (strain CDC 684 / NRRL 3495)</name>
    <dbReference type="NCBI Taxonomy" id="568206"/>
    <lineage>
        <taxon>Bacteria</taxon>
        <taxon>Bacillati</taxon>
        <taxon>Bacillota</taxon>
        <taxon>Bacilli</taxon>
        <taxon>Bacillales</taxon>
        <taxon>Bacillaceae</taxon>
        <taxon>Bacillus</taxon>
        <taxon>Bacillus cereus group</taxon>
    </lineage>
</organism>
<comment type="function">
    <text evidence="1">Catalyzes the folate-dependent formation of 5-methyl-uridine at position 54 (M-5-U54) in all tRNAs.</text>
</comment>
<comment type="catalytic activity">
    <reaction evidence="1">
        <text>uridine(54) in tRNA + (6R)-5,10-methylene-5,6,7,8-tetrahydrofolate + NADH + H(+) = 5-methyluridine(54) in tRNA + (6S)-5,6,7,8-tetrahydrofolate + NAD(+)</text>
        <dbReference type="Rhea" id="RHEA:16873"/>
        <dbReference type="Rhea" id="RHEA-COMP:10167"/>
        <dbReference type="Rhea" id="RHEA-COMP:10193"/>
        <dbReference type="ChEBI" id="CHEBI:15378"/>
        <dbReference type="ChEBI" id="CHEBI:15636"/>
        <dbReference type="ChEBI" id="CHEBI:57453"/>
        <dbReference type="ChEBI" id="CHEBI:57540"/>
        <dbReference type="ChEBI" id="CHEBI:57945"/>
        <dbReference type="ChEBI" id="CHEBI:65315"/>
        <dbReference type="ChEBI" id="CHEBI:74447"/>
        <dbReference type="EC" id="2.1.1.74"/>
    </reaction>
</comment>
<comment type="catalytic activity">
    <reaction evidence="1">
        <text>uridine(54) in tRNA + (6R)-5,10-methylene-5,6,7,8-tetrahydrofolate + NADPH + H(+) = 5-methyluridine(54) in tRNA + (6S)-5,6,7,8-tetrahydrofolate + NADP(+)</text>
        <dbReference type="Rhea" id="RHEA:62372"/>
        <dbReference type="Rhea" id="RHEA-COMP:10167"/>
        <dbReference type="Rhea" id="RHEA-COMP:10193"/>
        <dbReference type="ChEBI" id="CHEBI:15378"/>
        <dbReference type="ChEBI" id="CHEBI:15636"/>
        <dbReference type="ChEBI" id="CHEBI:57453"/>
        <dbReference type="ChEBI" id="CHEBI:57783"/>
        <dbReference type="ChEBI" id="CHEBI:58349"/>
        <dbReference type="ChEBI" id="CHEBI:65315"/>
        <dbReference type="ChEBI" id="CHEBI:74447"/>
        <dbReference type="EC" id="2.1.1.74"/>
    </reaction>
</comment>
<comment type="cofactor">
    <cofactor evidence="1">
        <name>FAD</name>
        <dbReference type="ChEBI" id="CHEBI:57692"/>
    </cofactor>
</comment>
<comment type="subcellular location">
    <subcellularLocation>
        <location evidence="1">Cytoplasm</location>
    </subcellularLocation>
</comment>
<comment type="similarity">
    <text evidence="1">Belongs to the MnmG family. TrmFO subfamily.</text>
</comment>
<protein>
    <recommendedName>
        <fullName evidence="1">Methylenetetrahydrofolate--tRNA-(uracil-5-)-methyltransferase TrmFO</fullName>
        <ecNumber evidence="1">2.1.1.74</ecNumber>
    </recommendedName>
    <alternativeName>
        <fullName evidence="1">Folate-dependent tRNA (uracil-5-)-methyltransferase</fullName>
    </alternativeName>
    <alternativeName>
        <fullName evidence="1">Folate-dependent tRNA(M-5-U54)-methyltransferase</fullName>
    </alternativeName>
</protein>
<accession>C3L795</accession>